<keyword id="KW-0687">Ribonucleoprotein</keyword>
<keyword id="KW-0689">Ribosomal protein</keyword>
<protein>
    <recommendedName>
        <fullName evidence="1">Large ribosomal subunit protein bL34</fullName>
    </recommendedName>
    <alternativeName>
        <fullName evidence="3">50S ribosomal protein L34</fullName>
    </alternativeName>
</protein>
<feature type="chain" id="PRO_1000196030" description="Large ribosomal subunit protein bL34">
    <location>
        <begin position="1"/>
        <end position="44"/>
    </location>
</feature>
<feature type="region of interest" description="Disordered" evidence="2">
    <location>
        <begin position="1"/>
        <end position="44"/>
    </location>
</feature>
<feature type="compositionally biased region" description="Basic residues" evidence="2">
    <location>
        <begin position="1"/>
        <end position="19"/>
    </location>
</feature>
<feature type="compositionally biased region" description="Basic residues" evidence="2">
    <location>
        <begin position="31"/>
        <end position="44"/>
    </location>
</feature>
<dbReference type="EMBL" id="CP001020">
    <property type="protein sequence ID" value="ACJ19352.1"/>
    <property type="molecule type" value="Genomic_DNA"/>
</dbReference>
<dbReference type="RefSeq" id="WP_005769984.1">
    <property type="nucleotide sequence ID" value="NC_011528.1"/>
</dbReference>
<dbReference type="SMR" id="B6J8U4"/>
<dbReference type="KEGG" id="cbc:CbuK_0024"/>
<dbReference type="HOGENOM" id="CLU_129938_2_0_6"/>
<dbReference type="GO" id="GO:1990904">
    <property type="term" value="C:ribonucleoprotein complex"/>
    <property type="evidence" value="ECO:0007669"/>
    <property type="project" value="UniProtKB-KW"/>
</dbReference>
<dbReference type="GO" id="GO:0005840">
    <property type="term" value="C:ribosome"/>
    <property type="evidence" value="ECO:0007669"/>
    <property type="project" value="UniProtKB-KW"/>
</dbReference>
<dbReference type="GO" id="GO:0003735">
    <property type="term" value="F:structural constituent of ribosome"/>
    <property type="evidence" value="ECO:0007669"/>
    <property type="project" value="InterPro"/>
</dbReference>
<dbReference type="GO" id="GO:0006412">
    <property type="term" value="P:translation"/>
    <property type="evidence" value="ECO:0007669"/>
    <property type="project" value="UniProtKB-UniRule"/>
</dbReference>
<dbReference type="FunFam" id="1.10.287.3980:FF:000001">
    <property type="entry name" value="Mitochondrial ribosomal protein L34"/>
    <property type="match status" value="1"/>
</dbReference>
<dbReference type="Gene3D" id="1.10.287.3980">
    <property type="match status" value="1"/>
</dbReference>
<dbReference type="HAMAP" id="MF_00391">
    <property type="entry name" value="Ribosomal_bL34"/>
    <property type="match status" value="1"/>
</dbReference>
<dbReference type="InterPro" id="IPR000271">
    <property type="entry name" value="Ribosomal_bL34"/>
</dbReference>
<dbReference type="InterPro" id="IPR020939">
    <property type="entry name" value="Ribosomal_bL34_CS"/>
</dbReference>
<dbReference type="NCBIfam" id="TIGR01030">
    <property type="entry name" value="rpmH_bact"/>
    <property type="match status" value="1"/>
</dbReference>
<dbReference type="PANTHER" id="PTHR14503:SF4">
    <property type="entry name" value="LARGE RIBOSOMAL SUBUNIT PROTEIN BL34M"/>
    <property type="match status" value="1"/>
</dbReference>
<dbReference type="PANTHER" id="PTHR14503">
    <property type="entry name" value="MITOCHONDRIAL RIBOSOMAL PROTEIN 34 FAMILY MEMBER"/>
    <property type="match status" value="1"/>
</dbReference>
<dbReference type="Pfam" id="PF00468">
    <property type="entry name" value="Ribosomal_L34"/>
    <property type="match status" value="1"/>
</dbReference>
<dbReference type="PROSITE" id="PS00784">
    <property type="entry name" value="RIBOSOMAL_L34"/>
    <property type="match status" value="1"/>
</dbReference>
<sequence>MKRTYQPSKLKRNRTHGFRARMATKNGRQVLNRRRAKGRKRLTV</sequence>
<comment type="similarity">
    <text evidence="1">Belongs to the bacterial ribosomal protein bL34 family.</text>
</comment>
<gene>
    <name evidence="1" type="primary">rpmH</name>
    <name type="ordered locus">CbuK_0024</name>
</gene>
<evidence type="ECO:0000255" key="1">
    <source>
        <dbReference type="HAMAP-Rule" id="MF_00391"/>
    </source>
</evidence>
<evidence type="ECO:0000256" key="2">
    <source>
        <dbReference type="SAM" id="MobiDB-lite"/>
    </source>
</evidence>
<evidence type="ECO:0000305" key="3"/>
<organism>
    <name type="scientific">Coxiella burnetii (strain CbuK_Q154)</name>
    <name type="common">Coxiella burnetii (strain Q154)</name>
    <dbReference type="NCBI Taxonomy" id="434924"/>
    <lineage>
        <taxon>Bacteria</taxon>
        <taxon>Pseudomonadati</taxon>
        <taxon>Pseudomonadota</taxon>
        <taxon>Gammaproteobacteria</taxon>
        <taxon>Legionellales</taxon>
        <taxon>Coxiellaceae</taxon>
        <taxon>Coxiella</taxon>
    </lineage>
</organism>
<accession>B6J8U4</accession>
<proteinExistence type="inferred from homology"/>
<reference key="1">
    <citation type="journal article" date="2009" name="Infect. Immun.">
        <title>Comparative genomics reveal extensive transposon-mediated genomic plasticity and diversity among potential effector proteins within the genus Coxiella.</title>
        <authorList>
            <person name="Beare P.A."/>
            <person name="Unsworth N."/>
            <person name="Andoh M."/>
            <person name="Voth D.E."/>
            <person name="Omsland A."/>
            <person name="Gilk S.D."/>
            <person name="Williams K.P."/>
            <person name="Sobral B.W."/>
            <person name="Kupko J.J. III"/>
            <person name="Porcella S.F."/>
            <person name="Samuel J.E."/>
            <person name="Heinzen R.A."/>
        </authorList>
    </citation>
    <scope>NUCLEOTIDE SEQUENCE [LARGE SCALE GENOMIC DNA]</scope>
    <source>
        <strain>CbuK_Q154</strain>
    </source>
</reference>
<name>RL34_COXB1</name>